<proteinExistence type="inferred from homology"/>
<gene>
    <name evidence="1" type="primary">lgt</name>
    <name type="ordered locus">llmg_0583</name>
</gene>
<keyword id="KW-1003">Cell membrane</keyword>
<keyword id="KW-0472">Membrane</keyword>
<keyword id="KW-0808">Transferase</keyword>
<keyword id="KW-0812">Transmembrane</keyword>
<keyword id="KW-1133">Transmembrane helix</keyword>
<name>LGT_LACLM</name>
<feature type="chain" id="PRO_1000053447" description="Phosphatidylglycerol--prolipoprotein diacylglyceryl transferase">
    <location>
        <begin position="1"/>
        <end position="261"/>
    </location>
</feature>
<feature type="transmembrane region" description="Helical" evidence="1">
    <location>
        <begin position="20"/>
        <end position="40"/>
    </location>
</feature>
<feature type="transmembrane region" description="Helical" evidence="1">
    <location>
        <begin position="54"/>
        <end position="74"/>
    </location>
</feature>
<feature type="transmembrane region" description="Helical" evidence="1">
    <location>
        <begin position="88"/>
        <end position="108"/>
    </location>
</feature>
<feature type="transmembrane region" description="Helical" evidence="1">
    <location>
        <begin position="175"/>
        <end position="195"/>
    </location>
</feature>
<feature type="transmembrane region" description="Helical" evidence="1">
    <location>
        <begin position="235"/>
        <end position="255"/>
    </location>
</feature>
<feature type="binding site" evidence="1">
    <location>
        <position position="139"/>
    </location>
    <ligand>
        <name>a 1,2-diacyl-sn-glycero-3-phospho-(1'-sn-glycerol)</name>
        <dbReference type="ChEBI" id="CHEBI:64716"/>
    </ligand>
</feature>
<comment type="function">
    <text evidence="1">Catalyzes the transfer of the diacylglyceryl group from phosphatidylglycerol to the sulfhydryl group of the N-terminal cysteine of a prolipoprotein, the first step in the formation of mature lipoproteins.</text>
</comment>
<comment type="catalytic activity">
    <reaction evidence="1">
        <text>L-cysteinyl-[prolipoprotein] + a 1,2-diacyl-sn-glycero-3-phospho-(1'-sn-glycerol) = an S-1,2-diacyl-sn-glyceryl-L-cysteinyl-[prolipoprotein] + sn-glycerol 1-phosphate + H(+)</text>
        <dbReference type="Rhea" id="RHEA:56712"/>
        <dbReference type="Rhea" id="RHEA-COMP:14679"/>
        <dbReference type="Rhea" id="RHEA-COMP:14680"/>
        <dbReference type="ChEBI" id="CHEBI:15378"/>
        <dbReference type="ChEBI" id="CHEBI:29950"/>
        <dbReference type="ChEBI" id="CHEBI:57685"/>
        <dbReference type="ChEBI" id="CHEBI:64716"/>
        <dbReference type="ChEBI" id="CHEBI:140658"/>
        <dbReference type="EC" id="2.5.1.145"/>
    </reaction>
</comment>
<comment type="pathway">
    <text evidence="1">Protein modification; lipoprotein biosynthesis (diacylglyceryl transfer).</text>
</comment>
<comment type="subcellular location">
    <subcellularLocation>
        <location evidence="1">Cell membrane</location>
        <topology evidence="1">Multi-pass membrane protein</topology>
    </subcellularLocation>
</comment>
<comment type="similarity">
    <text evidence="1">Belongs to the Lgt family.</text>
</comment>
<accession>A2RIT7</accession>
<evidence type="ECO:0000255" key="1">
    <source>
        <dbReference type="HAMAP-Rule" id="MF_01147"/>
    </source>
</evidence>
<reference key="1">
    <citation type="journal article" date="2007" name="J. Bacteriol.">
        <title>The complete genome sequence of the lactic acid bacterial paradigm Lactococcus lactis subsp. cremoris MG1363.</title>
        <authorList>
            <person name="Wegmann U."/>
            <person name="O'Connell-Motherway M."/>
            <person name="Zomer A."/>
            <person name="Buist G."/>
            <person name="Shearman C."/>
            <person name="Canchaya C."/>
            <person name="Ventura M."/>
            <person name="Goesmann A."/>
            <person name="Gasson M.J."/>
            <person name="Kuipers O.P."/>
            <person name="van Sinderen D."/>
            <person name="Kok J."/>
        </authorList>
    </citation>
    <scope>NUCLEOTIDE SEQUENCE [LARGE SCALE GENOMIC DNA]</scope>
    <source>
        <strain>MG1363</strain>
    </source>
</reference>
<dbReference type="EC" id="2.5.1.145" evidence="1"/>
<dbReference type="EMBL" id="AM406671">
    <property type="protein sequence ID" value="CAL97183.1"/>
    <property type="molecule type" value="Genomic_DNA"/>
</dbReference>
<dbReference type="RefSeq" id="WP_011834604.1">
    <property type="nucleotide sequence ID" value="NC_009004.1"/>
</dbReference>
<dbReference type="SMR" id="A2RIT7"/>
<dbReference type="STRING" id="416870.llmg_0583"/>
<dbReference type="KEGG" id="llm:llmg_0583"/>
<dbReference type="eggNOG" id="COG0682">
    <property type="taxonomic scope" value="Bacteria"/>
</dbReference>
<dbReference type="HOGENOM" id="CLU_013386_0_1_9"/>
<dbReference type="OrthoDB" id="871140at2"/>
<dbReference type="PhylomeDB" id="A2RIT7"/>
<dbReference type="UniPathway" id="UPA00664"/>
<dbReference type="Proteomes" id="UP000000364">
    <property type="component" value="Chromosome"/>
</dbReference>
<dbReference type="GO" id="GO:0005886">
    <property type="term" value="C:plasma membrane"/>
    <property type="evidence" value="ECO:0007669"/>
    <property type="project" value="UniProtKB-SubCell"/>
</dbReference>
<dbReference type="GO" id="GO:0008961">
    <property type="term" value="F:phosphatidylglycerol-prolipoprotein diacylglyceryl transferase activity"/>
    <property type="evidence" value="ECO:0007669"/>
    <property type="project" value="UniProtKB-UniRule"/>
</dbReference>
<dbReference type="GO" id="GO:0042158">
    <property type="term" value="P:lipoprotein biosynthetic process"/>
    <property type="evidence" value="ECO:0007669"/>
    <property type="project" value="UniProtKB-UniRule"/>
</dbReference>
<dbReference type="HAMAP" id="MF_01147">
    <property type="entry name" value="Lgt"/>
    <property type="match status" value="1"/>
</dbReference>
<dbReference type="InterPro" id="IPR001640">
    <property type="entry name" value="Lgt"/>
</dbReference>
<dbReference type="NCBIfam" id="TIGR00544">
    <property type="entry name" value="lgt"/>
    <property type="match status" value="1"/>
</dbReference>
<dbReference type="PANTHER" id="PTHR30589:SF0">
    <property type="entry name" value="PHOSPHATIDYLGLYCEROL--PROLIPOPROTEIN DIACYLGLYCERYL TRANSFERASE"/>
    <property type="match status" value="1"/>
</dbReference>
<dbReference type="PANTHER" id="PTHR30589">
    <property type="entry name" value="PROLIPOPROTEIN DIACYLGLYCERYL TRANSFERASE"/>
    <property type="match status" value="1"/>
</dbReference>
<dbReference type="Pfam" id="PF01790">
    <property type="entry name" value="LGT"/>
    <property type="match status" value="1"/>
</dbReference>
<dbReference type="PROSITE" id="PS01311">
    <property type="entry name" value="LGT"/>
    <property type="match status" value="1"/>
</dbReference>
<sequence>MNNLFPFLALDKIALQLGPLAIHWYAIFIVGGAALAVWLACKEAPKRNIKVDDIIDFVLFAFPLGIVGARLYYVIFQWSYYSQHPSQIIAIWDGGGAIYGSLIAGAIVLFVFSYYRMIHPLDLLDITIPGVFLAQAMGRWGNFVNQEAYGKIVSNLDWLPPFIRNQMFIEGHYRMPTFLFESIGTLSGFILVMVFRHRIKGLKRGDIFSSYLVWYGAVRFIVEGMRTDSLMLGPARVSQWLSVLLVILGIILFVYRRIKKN</sequence>
<protein>
    <recommendedName>
        <fullName evidence="1">Phosphatidylglycerol--prolipoprotein diacylglyceryl transferase</fullName>
        <ecNumber evidence="1">2.5.1.145</ecNumber>
    </recommendedName>
</protein>
<organism>
    <name type="scientific">Lactococcus lactis subsp. cremoris (strain MG1363)</name>
    <dbReference type="NCBI Taxonomy" id="416870"/>
    <lineage>
        <taxon>Bacteria</taxon>
        <taxon>Bacillati</taxon>
        <taxon>Bacillota</taxon>
        <taxon>Bacilli</taxon>
        <taxon>Lactobacillales</taxon>
        <taxon>Streptococcaceae</taxon>
        <taxon>Lactococcus</taxon>
        <taxon>Lactococcus cremoris subsp. cremoris</taxon>
    </lineage>
</organism>